<proteinExistence type="inferred from homology"/>
<reference key="1">
    <citation type="journal article" date="2003" name="Genome Res.">
        <title>Comparative genome analysis of Vibrio vulnificus, a marine pathogen.</title>
        <authorList>
            <person name="Chen C.-Y."/>
            <person name="Wu K.-M."/>
            <person name="Chang Y.-C."/>
            <person name="Chang C.-H."/>
            <person name="Tsai H.-C."/>
            <person name="Liao T.-L."/>
            <person name="Liu Y.-M."/>
            <person name="Chen H.-J."/>
            <person name="Shen A.B.-T."/>
            <person name="Li J.-C."/>
            <person name="Su T.-L."/>
            <person name="Shao C.-P."/>
            <person name="Lee C.-T."/>
            <person name="Hor L.-I."/>
            <person name="Tsai S.-F."/>
        </authorList>
    </citation>
    <scope>NUCLEOTIDE SEQUENCE [LARGE SCALE GENOMIC DNA]</scope>
    <source>
        <strain>YJ016</strain>
    </source>
</reference>
<accession>Q7MNP0</accession>
<organism>
    <name type="scientific">Vibrio vulnificus (strain YJ016)</name>
    <dbReference type="NCBI Taxonomy" id="196600"/>
    <lineage>
        <taxon>Bacteria</taxon>
        <taxon>Pseudomonadati</taxon>
        <taxon>Pseudomonadota</taxon>
        <taxon>Gammaproteobacteria</taxon>
        <taxon>Vibrionales</taxon>
        <taxon>Vibrionaceae</taxon>
        <taxon>Vibrio</taxon>
    </lineage>
</organism>
<comment type="function">
    <text evidence="1">Accelerates the degradation of transcripts by removing pyrophosphate from the 5'-end of triphosphorylated RNA, leading to a more labile monophosphorylated state that can stimulate subsequent ribonuclease cleavage.</text>
</comment>
<comment type="cofactor">
    <cofactor evidence="1">
        <name>a divalent metal cation</name>
        <dbReference type="ChEBI" id="CHEBI:60240"/>
    </cofactor>
</comment>
<comment type="similarity">
    <text evidence="1">Belongs to the Nudix hydrolase family. RppH subfamily.</text>
</comment>
<dbReference type="EC" id="3.6.1.-" evidence="1"/>
<dbReference type="EMBL" id="BA000037">
    <property type="protein sequence ID" value="BAC93439.1"/>
    <property type="molecule type" value="Genomic_DNA"/>
</dbReference>
<dbReference type="RefSeq" id="WP_011078608.1">
    <property type="nucleotide sequence ID" value="NC_005139.1"/>
</dbReference>
<dbReference type="SMR" id="Q7MNP0"/>
<dbReference type="STRING" id="672.VV93_v1c06150"/>
<dbReference type="GeneID" id="93894832"/>
<dbReference type="KEGG" id="vvy:VV0675"/>
<dbReference type="eggNOG" id="COG0494">
    <property type="taxonomic scope" value="Bacteria"/>
</dbReference>
<dbReference type="HOGENOM" id="CLU_087195_3_2_6"/>
<dbReference type="Proteomes" id="UP000002675">
    <property type="component" value="Chromosome I"/>
</dbReference>
<dbReference type="GO" id="GO:0005737">
    <property type="term" value="C:cytoplasm"/>
    <property type="evidence" value="ECO:0007669"/>
    <property type="project" value="TreeGrafter"/>
</dbReference>
<dbReference type="GO" id="GO:0034353">
    <property type="term" value="F:mRNA 5'-diphosphatase activity"/>
    <property type="evidence" value="ECO:0007669"/>
    <property type="project" value="TreeGrafter"/>
</dbReference>
<dbReference type="GO" id="GO:0006402">
    <property type="term" value="P:mRNA catabolic process"/>
    <property type="evidence" value="ECO:0007669"/>
    <property type="project" value="TreeGrafter"/>
</dbReference>
<dbReference type="CDD" id="cd03671">
    <property type="entry name" value="NUDIX_Ap4A_hydrolase_plant_like"/>
    <property type="match status" value="1"/>
</dbReference>
<dbReference type="FunFam" id="3.90.79.10:FF:000001">
    <property type="entry name" value="RNA pyrophosphohydrolase"/>
    <property type="match status" value="1"/>
</dbReference>
<dbReference type="Gene3D" id="3.90.79.10">
    <property type="entry name" value="Nucleoside Triphosphate Pyrophosphohydrolase"/>
    <property type="match status" value="1"/>
</dbReference>
<dbReference type="HAMAP" id="MF_00298">
    <property type="entry name" value="Nudix_RppH"/>
    <property type="match status" value="1"/>
</dbReference>
<dbReference type="InterPro" id="IPR020476">
    <property type="entry name" value="Nudix_hydrolase"/>
</dbReference>
<dbReference type="InterPro" id="IPR015797">
    <property type="entry name" value="NUDIX_hydrolase-like_dom_sf"/>
</dbReference>
<dbReference type="InterPro" id="IPR020084">
    <property type="entry name" value="NUDIX_hydrolase_CS"/>
</dbReference>
<dbReference type="InterPro" id="IPR000086">
    <property type="entry name" value="NUDIX_hydrolase_dom"/>
</dbReference>
<dbReference type="InterPro" id="IPR022927">
    <property type="entry name" value="RppH"/>
</dbReference>
<dbReference type="NCBIfam" id="NF001934">
    <property type="entry name" value="PRK00714.1-1"/>
    <property type="match status" value="1"/>
</dbReference>
<dbReference type="NCBIfam" id="NF001936">
    <property type="entry name" value="PRK00714.1-3"/>
    <property type="match status" value="1"/>
</dbReference>
<dbReference type="NCBIfam" id="NF001937">
    <property type="entry name" value="PRK00714.1-4"/>
    <property type="match status" value="1"/>
</dbReference>
<dbReference type="NCBIfam" id="NF001938">
    <property type="entry name" value="PRK00714.1-5"/>
    <property type="match status" value="1"/>
</dbReference>
<dbReference type="PANTHER" id="PTHR23114">
    <property type="entry name" value="M7GPPPN-MRNA HYDROLASE"/>
    <property type="match status" value="1"/>
</dbReference>
<dbReference type="PANTHER" id="PTHR23114:SF17">
    <property type="entry name" value="M7GPPPN-MRNA HYDROLASE"/>
    <property type="match status" value="1"/>
</dbReference>
<dbReference type="Pfam" id="PF00293">
    <property type="entry name" value="NUDIX"/>
    <property type="match status" value="1"/>
</dbReference>
<dbReference type="PRINTS" id="PR00502">
    <property type="entry name" value="NUDIXFAMILY"/>
</dbReference>
<dbReference type="SUPFAM" id="SSF55811">
    <property type="entry name" value="Nudix"/>
    <property type="match status" value="1"/>
</dbReference>
<dbReference type="PROSITE" id="PS51462">
    <property type="entry name" value="NUDIX"/>
    <property type="match status" value="1"/>
</dbReference>
<dbReference type="PROSITE" id="PS00893">
    <property type="entry name" value="NUDIX_BOX"/>
    <property type="match status" value="1"/>
</dbReference>
<protein>
    <recommendedName>
        <fullName evidence="1">RNA pyrophosphohydrolase</fullName>
        <ecNumber evidence="1">3.6.1.-</ecNumber>
    </recommendedName>
    <alternativeName>
        <fullName evidence="1">(Di)nucleoside polyphosphate hydrolase</fullName>
    </alternativeName>
</protein>
<evidence type="ECO:0000255" key="1">
    <source>
        <dbReference type="HAMAP-Rule" id="MF_00298"/>
    </source>
</evidence>
<feature type="chain" id="PRO_0000057033" description="RNA pyrophosphohydrolase">
    <location>
        <begin position="1"/>
        <end position="172"/>
    </location>
</feature>
<feature type="domain" description="Nudix hydrolase" evidence="1">
    <location>
        <begin position="6"/>
        <end position="149"/>
    </location>
</feature>
<feature type="short sequence motif" description="Nudix box">
    <location>
        <begin position="38"/>
        <end position="59"/>
    </location>
</feature>
<keyword id="KW-0378">Hydrolase</keyword>
<name>RPPH_VIBVY</name>
<gene>
    <name evidence="1" type="primary">rppH</name>
    <name evidence="1" type="synonym">nudH</name>
    <name type="ordered locus">VV0675</name>
</gene>
<sequence length="172" mass="20529">MIDGDGYRLNVGIVICNNHGQVFWAKRYGQHSWQFPQGGIDDGETPEQAMFRELYEEVGLTHKDVKIIASSRHWLRYKLPKRLVRWDSKPVCIGQKQKWFLLRLECDESKINMQKGSSPEFDGWRWVSYWYPVRQVVSFKRDVYRRAMKEFASLAMPFRERKLKGKKVKRRG</sequence>